<gene>
    <name type="primary">hisE</name>
    <name type="ordered locus">VNG_2596G</name>
</gene>
<evidence type="ECO:0000250" key="1"/>
<evidence type="ECO:0000305" key="2"/>
<comment type="catalytic activity">
    <reaction>
        <text>1-(5-phospho-beta-D-ribosyl)-ATP + H2O = 1-(5-phospho-beta-D-ribosyl)-5'-AMP + diphosphate + H(+)</text>
        <dbReference type="Rhea" id="RHEA:22828"/>
        <dbReference type="ChEBI" id="CHEBI:15377"/>
        <dbReference type="ChEBI" id="CHEBI:15378"/>
        <dbReference type="ChEBI" id="CHEBI:33019"/>
        <dbReference type="ChEBI" id="CHEBI:59457"/>
        <dbReference type="ChEBI" id="CHEBI:73183"/>
        <dbReference type="EC" id="3.6.1.31"/>
    </reaction>
</comment>
<comment type="pathway">
    <text>Amino-acid biosynthesis; L-histidine biosynthesis; L-histidine from 5-phospho-alpha-D-ribose 1-diphosphate: step 2/9.</text>
</comment>
<comment type="subcellular location">
    <subcellularLocation>
        <location evidence="1">Cytoplasm</location>
    </subcellularLocation>
</comment>
<comment type="similarity">
    <text evidence="2">Belongs to the PRA-PH family.</text>
</comment>
<dbReference type="EC" id="3.6.1.31"/>
<dbReference type="EMBL" id="AE004437">
    <property type="protein sequence ID" value="AAG20637.1"/>
    <property type="molecule type" value="Genomic_DNA"/>
</dbReference>
<dbReference type="PIR" id="A84409">
    <property type="entry name" value="A84409"/>
</dbReference>
<dbReference type="RefSeq" id="WP_010903939.1">
    <property type="nucleotide sequence ID" value="NC_002607.1"/>
</dbReference>
<dbReference type="SMR" id="Q9HMD4"/>
<dbReference type="FunCoup" id="Q9HMD4">
    <property type="interactions" value="51"/>
</dbReference>
<dbReference type="STRING" id="64091.VNG_2596G"/>
<dbReference type="PaxDb" id="64091-VNG_2596G"/>
<dbReference type="GeneID" id="89348580"/>
<dbReference type="KEGG" id="hal:VNG_2596G"/>
<dbReference type="PATRIC" id="fig|64091.14.peg.2010"/>
<dbReference type="HOGENOM" id="CLU_123337_0_0_2"/>
<dbReference type="InParanoid" id="Q9HMD4"/>
<dbReference type="OrthoDB" id="39686at2157"/>
<dbReference type="PhylomeDB" id="Q9HMD4"/>
<dbReference type="UniPathway" id="UPA00031">
    <property type="reaction ID" value="UER00007"/>
</dbReference>
<dbReference type="Proteomes" id="UP000000554">
    <property type="component" value="Chromosome"/>
</dbReference>
<dbReference type="GO" id="GO:0005737">
    <property type="term" value="C:cytoplasm"/>
    <property type="evidence" value="ECO:0007669"/>
    <property type="project" value="UniProtKB-SubCell"/>
</dbReference>
<dbReference type="GO" id="GO:0005524">
    <property type="term" value="F:ATP binding"/>
    <property type="evidence" value="ECO:0007669"/>
    <property type="project" value="UniProtKB-KW"/>
</dbReference>
<dbReference type="GO" id="GO:0004636">
    <property type="term" value="F:phosphoribosyl-ATP diphosphatase activity"/>
    <property type="evidence" value="ECO:0007669"/>
    <property type="project" value="UniProtKB-UniRule"/>
</dbReference>
<dbReference type="GO" id="GO:0000105">
    <property type="term" value="P:L-histidine biosynthetic process"/>
    <property type="evidence" value="ECO:0007669"/>
    <property type="project" value="UniProtKB-UniRule"/>
</dbReference>
<dbReference type="CDD" id="cd11534">
    <property type="entry name" value="NTP-PPase_HisIE_like"/>
    <property type="match status" value="1"/>
</dbReference>
<dbReference type="FunFam" id="1.10.287.1080:FF:000002">
    <property type="entry name" value="Histidine biosynthesis bifunctional protein HisIE"/>
    <property type="match status" value="1"/>
</dbReference>
<dbReference type="Gene3D" id="1.10.287.1080">
    <property type="entry name" value="MazG-like"/>
    <property type="match status" value="1"/>
</dbReference>
<dbReference type="HAMAP" id="MF_01020">
    <property type="entry name" value="HisE"/>
    <property type="match status" value="1"/>
</dbReference>
<dbReference type="InterPro" id="IPR008179">
    <property type="entry name" value="HisE"/>
</dbReference>
<dbReference type="InterPro" id="IPR021130">
    <property type="entry name" value="PRib-ATP_PPHydrolase-like"/>
</dbReference>
<dbReference type="NCBIfam" id="TIGR03188">
    <property type="entry name" value="histidine_hisI"/>
    <property type="match status" value="1"/>
</dbReference>
<dbReference type="PANTHER" id="PTHR42945">
    <property type="entry name" value="HISTIDINE BIOSYNTHESIS BIFUNCTIONAL PROTEIN"/>
    <property type="match status" value="1"/>
</dbReference>
<dbReference type="PANTHER" id="PTHR42945:SF1">
    <property type="entry name" value="HISTIDINE BIOSYNTHESIS BIFUNCTIONAL PROTEIN HIS7"/>
    <property type="match status" value="1"/>
</dbReference>
<dbReference type="Pfam" id="PF01503">
    <property type="entry name" value="PRA-PH"/>
    <property type="match status" value="1"/>
</dbReference>
<dbReference type="SUPFAM" id="SSF101386">
    <property type="entry name" value="all-alpha NTP pyrophosphatases"/>
    <property type="match status" value="1"/>
</dbReference>
<proteinExistence type="inferred from homology"/>
<accession>Q9HMD4</accession>
<sequence>MSDPLRELFDVIEDRKETMPENSYTASLLADDEKGENAALEKVGEEATEFLLAAKDGDTDELAHEGADVVYHMLVVLAQQDMDVEALLAELDDRR</sequence>
<protein>
    <recommendedName>
        <fullName>Phosphoribosyl-ATP pyrophosphatase</fullName>
        <shortName>PRA-PH</shortName>
        <ecNumber>3.6.1.31</ecNumber>
    </recommendedName>
</protein>
<keyword id="KW-0028">Amino-acid biosynthesis</keyword>
<keyword id="KW-0067">ATP-binding</keyword>
<keyword id="KW-0963">Cytoplasm</keyword>
<keyword id="KW-0368">Histidine biosynthesis</keyword>
<keyword id="KW-0378">Hydrolase</keyword>
<keyword id="KW-0547">Nucleotide-binding</keyword>
<keyword id="KW-1185">Reference proteome</keyword>
<feature type="chain" id="PRO_0000136389" description="Phosphoribosyl-ATP pyrophosphatase">
    <location>
        <begin position="1"/>
        <end position="95"/>
    </location>
</feature>
<reference key="1">
    <citation type="journal article" date="2000" name="Proc. Natl. Acad. Sci. U.S.A.">
        <title>Genome sequence of Halobacterium species NRC-1.</title>
        <authorList>
            <person name="Ng W.V."/>
            <person name="Kennedy S.P."/>
            <person name="Mahairas G.G."/>
            <person name="Berquist B."/>
            <person name="Pan M."/>
            <person name="Shukla H.D."/>
            <person name="Lasky S.R."/>
            <person name="Baliga N.S."/>
            <person name="Thorsson V."/>
            <person name="Sbrogna J."/>
            <person name="Swartzell S."/>
            <person name="Weir D."/>
            <person name="Hall J."/>
            <person name="Dahl T.A."/>
            <person name="Welti R."/>
            <person name="Goo Y.A."/>
            <person name="Leithauser B."/>
            <person name="Keller K."/>
            <person name="Cruz R."/>
            <person name="Danson M.J."/>
            <person name="Hough D.W."/>
            <person name="Maddocks D.G."/>
            <person name="Jablonski P.E."/>
            <person name="Krebs M.P."/>
            <person name="Angevine C.M."/>
            <person name="Dale H."/>
            <person name="Isenbarger T.A."/>
            <person name="Peck R.F."/>
            <person name="Pohlschroder M."/>
            <person name="Spudich J.L."/>
            <person name="Jung K.-H."/>
            <person name="Alam M."/>
            <person name="Freitas T."/>
            <person name="Hou S."/>
            <person name="Daniels C.J."/>
            <person name="Dennis P.P."/>
            <person name="Omer A.D."/>
            <person name="Ebhardt H."/>
            <person name="Lowe T.M."/>
            <person name="Liang P."/>
            <person name="Riley M."/>
            <person name="Hood L."/>
            <person name="DasSarma S."/>
        </authorList>
    </citation>
    <scope>NUCLEOTIDE SEQUENCE [LARGE SCALE GENOMIC DNA]</scope>
    <source>
        <strain>ATCC 700922 / JCM 11081 / NRC-1</strain>
    </source>
</reference>
<name>HIS2_HALSA</name>
<organism>
    <name type="scientific">Halobacterium salinarum (strain ATCC 700922 / JCM 11081 / NRC-1)</name>
    <name type="common">Halobacterium halobium</name>
    <dbReference type="NCBI Taxonomy" id="64091"/>
    <lineage>
        <taxon>Archaea</taxon>
        <taxon>Methanobacteriati</taxon>
        <taxon>Methanobacteriota</taxon>
        <taxon>Stenosarchaea group</taxon>
        <taxon>Halobacteria</taxon>
        <taxon>Halobacteriales</taxon>
        <taxon>Halobacteriaceae</taxon>
        <taxon>Halobacterium</taxon>
        <taxon>Halobacterium salinarum NRC-34001</taxon>
    </lineage>
</organism>